<sequence>MMYKIVSIPGDGIGPEVVAGALDVLNAVAKKHGFEVSVEEHLFGGASYDVHGSMLTDETLEACKNCDAVLLGAVGGYKWENLPHDKKPEAALLKIRKELGLFANLRPARVYDALVASSTLKTEVVQGTDFMVFRELTGGIYFGQPRGYDETRGWNTMVYERYEVERIARLAFEYAQKRGNAKVTSIDKANVLEVSQFWRNIVHEVHQDFPEIELVDMYVDNAAMQVVRNPKQFEVIVTSNLFGDILSDISGMITGSLGMLPSASIGSEHALYEPIHGSAPDIAGQNKANPIATIASVAMMFENSFNRPEVAADIYAAIEGALAAGFRTGDIAAAGEAISSTTEMTAAIVARI</sequence>
<name>LEU3_CHLTE</name>
<keyword id="KW-0028">Amino-acid biosynthesis</keyword>
<keyword id="KW-0100">Branched-chain amino acid biosynthesis</keyword>
<keyword id="KW-0963">Cytoplasm</keyword>
<keyword id="KW-0432">Leucine biosynthesis</keyword>
<keyword id="KW-0460">Magnesium</keyword>
<keyword id="KW-0464">Manganese</keyword>
<keyword id="KW-0479">Metal-binding</keyword>
<keyword id="KW-0520">NAD</keyword>
<keyword id="KW-0560">Oxidoreductase</keyword>
<keyword id="KW-1185">Reference proteome</keyword>
<dbReference type="EC" id="1.1.1.85" evidence="1"/>
<dbReference type="EMBL" id="AE006470">
    <property type="protein sequence ID" value="AAM71857.1"/>
    <property type="molecule type" value="Genomic_DNA"/>
</dbReference>
<dbReference type="RefSeq" id="NP_661515.1">
    <property type="nucleotide sequence ID" value="NC_002932.3"/>
</dbReference>
<dbReference type="SMR" id="P59028"/>
<dbReference type="STRING" id="194439.CT0615"/>
<dbReference type="EnsemblBacteria" id="AAM71857">
    <property type="protein sequence ID" value="AAM71857"/>
    <property type="gene ID" value="CT0615"/>
</dbReference>
<dbReference type="KEGG" id="cte:CT0615"/>
<dbReference type="PATRIC" id="fig|194439.7.peg.572"/>
<dbReference type="eggNOG" id="COG0473">
    <property type="taxonomic scope" value="Bacteria"/>
</dbReference>
<dbReference type="HOGENOM" id="CLU_031953_0_3_10"/>
<dbReference type="OrthoDB" id="9806254at2"/>
<dbReference type="UniPathway" id="UPA00048">
    <property type="reaction ID" value="UER00072"/>
</dbReference>
<dbReference type="Proteomes" id="UP000001007">
    <property type="component" value="Chromosome"/>
</dbReference>
<dbReference type="GO" id="GO:0005829">
    <property type="term" value="C:cytosol"/>
    <property type="evidence" value="ECO:0007669"/>
    <property type="project" value="TreeGrafter"/>
</dbReference>
<dbReference type="GO" id="GO:0003862">
    <property type="term" value="F:3-isopropylmalate dehydrogenase activity"/>
    <property type="evidence" value="ECO:0007669"/>
    <property type="project" value="UniProtKB-UniRule"/>
</dbReference>
<dbReference type="GO" id="GO:0000287">
    <property type="term" value="F:magnesium ion binding"/>
    <property type="evidence" value="ECO:0007669"/>
    <property type="project" value="InterPro"/>
</dbReference>
<dbReference type="GO" id="GO:0051287">
    <property type="term" value="F:NAD binding"/>
    <property type="evidence" value="ECO:0007669"/>
    <property type="project" value="InterPro"/>
</dbReference>
<dbReference type="GO" id="GO:0009098">
    <property type="term" value="P:L-leucine biosynthetic process"/>
    <property type="evidence" value="ECO:0007669"/>
    <property type="project" value="UniProtKB-UniRule"/>
</dbReference>
<dbReference type="FunFam" id="3.40.718.10:FF:000006">
    <property type="entry name" value="3-isopropylmalate dehydrogenase"/>
    <property type="match status" value="1"/>
</dbReference>
<dbReference type="Gene3D" id="3.40.718.10">
    <property type="entry name" value="Isopropylmalate Dehydrogenase"/>
    <property type="match status" value="1"/>
</dbReference>
<dbReference type="HAMAP" id="MF_01033">
    <property type="entry name" value="LeuB_type1"/>
    <property type="match status" value="1"/>
</dbReference>
<dbReference type="InterPro" id="IPR019818">
    <property type="entry name" value="IsoCit/isopropylmalate_DH_CS"/>
</dbReference>
<dbReference type="InterPro" id="IPR024084">
    <property type="entry name" value="IsoPropMal-DH-like_dom"/>
</dbReference>
<dbReference type="InterPro" id="IPR004429">
    <property type="entry name" value="Isopropylmalate_DH"/>
</dbReference>
<dbReference type="NCBIfam" id="TIGR00169">
    <property type="entry name" value="leuB"/>
    <property type="match status" value="1"/>
</dbReference>
<dbReference type="PANTHER" id="PTHR42979">
    <property type="entry name" value="3-ISOPROPYLMALATE DEHYDROGENASE"/>
    <property type="match status" value="1"/>
</dbReference>
<dbReference type="PANTHER" id="PTHR42979:SF1">
    <property type="entry name" value="3-ISOPROPYLMALATE DEHYDROGENASE"/>
    <property type="match status" value="1"/>
</dbReference>
<dbReference type="Pfam" id="PF00180">
    <property type="entry name" value="Iso_dh"/>
    <property type="match status" value="1"/>
</dbReference>
<dbReference type="SMART" id="SM01329">
    <property type="entry name" value="Iso_dh"/>
    <property type="match status" value="1"/>
</dbReference>
<dbReference type="SUPFAM" id="SSF53659">
    <property type="entry name" value="Isocitrate/Isopropylmalate dehydrogenase-like"/>
    <property type="match status" value="1"/>
</dbReference>
<dbReference type="PROSITE" id="PS00470">
    <property type="entry name" value="IDH_IMDH"/>
    <property type="match status" value="1"/>
</dbReference>
<proteinExistence type="inferred from homology"/>
<feature type="chain" id="PRO_0000083678" description="3-isopropylmalate dehydrogenase">
    <location>
        <begin position="1"/>
        <end position="352"/>
    </location>
</feature>
<feature type="binding site" evidence="1">
    <location>
        <begin position="76"/>
        <end position="89"/>
    </location>
    <ligand>
        <name>NAD(+)</name>
        <dbReference type="ChEBI" id="CHEBI:57540"/>
    </ligand>
</feature>
<feature type="binding site" evidence="1">
    <location>
        <position position="96"/>
    </location>
    <ligand>
        <name>substrate</name>
    </ligand>
</feature>
<feature type="binding site" evidence="1">
    <location>
        <position position="106"/>
    </location>
    <ligand>
        <name>substrate</name>
    </ligand>
</feature>
<feature type="binding site" evidence="1">
    <location>
        <position position="134"/>
    </location>
    <ligand>
        <name>substrate</name>
    </ligand>
</feature>
<feature type="binding site" evidence="1">
    <location>
        <position position="220"/>
    </location>
    <ligand>
        <name>Mg(2+)</name>
        <dbReference type="ChEBI" id="CHEBI:18420"/>
    </ligand>
</feature>
<feature type="binding site" evidence="1">
    <location>
        <position position="220"/>
    </location>
    <ligand>
        <name>substrate</name>
    </ligand>
</feature>
<feature type="binding site" evidence="1">
    <location>
        <position position="244"/>
    </location>
    <ligand>
        <name>Mg(2+)</name>
        <dbReference type="ChEBI" id="CHEBI:18420"/>
    </ligand>
</feature>
<feature type="binding site" evidence="1">
    <location>
        <position position="248"/>
    </location>
    <ligand>
        <name>Mg(2+)</name>
        <dbReference type="ChEBI" id="CHEBI:18420"/>
    </ligand>
</feature>
<feature type="binding site" evidence="1">
    <location>
        <begin position="277"/>
        <end position="289"/>
    </location>
    <ligand>
        <name>NAD(+)</name>
        <dbReference type="ChEBI" id="CHEBI:57540"/>
    </ligand>
</feature>
<feature type="site" description="Important for catalysis" evidence="1">
    <location>
        <position position="141"/>
    </location>
</feature>
<feature type="site" description="Important for catalysis" evidence="1">
    <location>
        <position position="188"/>
    </location>
</feature>
<reference key="1">
    <citation type="journal article" date="2002" name="Proc. Natl. Acad. Sci. U.S.A.">
        <title>The complete genome sequence of Chlorobium tepidum TLS, a photosynthetic, anaerobic, green-sulfur bacterium.</title>
        <authorList>
            <person name="Eisen J.A."/>
            <person name="Nelson K.E."/>
            <person name="Paulsen I.T."/>
            <person name="Heidelberg J.F."/>
            <person name="Wu M."/>
            <person name="Dodson R.J."/>
            <person name="DeBoy R.T."/>
            <person name="Gwinn M.L."/>
            <person name="Nelson W.C."/>
            <person name="Haft D.H."/>
            <person name="Hickey E.K."/>
            <person name="Peterson J.D."/>
            <person name="Durkin A.S."/>
            <person name="Kolonay J.F."/>
            <person name="Yang F."/>
            <person name="Holt I.E."/>
            <person name="Umayam L.A."/>
            <person name="Mason T.M."/>
            <person name="Brenner M."/>
            <person name="Shea T.P."/>
            <person name="Parksey D.S."/>
            <person name="Nierman W.C."/>
            <person name="Feldblyum T.V."/>
            <person name="Hansen C.L."/>
            <person name="Craven M.B."/>
            <person name="Radune D."/>
            <person name="Vamathevan J.J."/>
            <person name="Khouri H.M."/>
            <person name="White O."/>
            <person name="Gruber T.M."/>
            <person name="Ketchum K.A."/>
            <person name="Venter J.C."/>
            <person name="Tettelin H."/>
            <person name="Bryant D.A."/>
            <person name="Fraser C.M."/>
        </authorList>
    </citation>
    <scope>NUCLEOTIDE SEQUENCE [LARGE SCALE GENOMIC DNA]</scope>
    <source>
        <strain>ATCC 49652 / DSM 12025 / NBRC 103806 / TLS</strain>
    </source>
</reference>
<evidence type="ECO:0000255" key="1">
    <source>
        <dbReference type="HAMAP-Rule" id="MF_01033"/>
    </source>
</evidence>
<organism>
    <name type="scientific">Chlorobaculum tepidum (strain ATCC 49652 / DSM 12025 / NBRC 103806 / TLS)</name>
    <name type="common">Chlorobium tepidum</name>
    <dbReference type="NCBI Taxonomy" id="194439"/>
    <lineage>
        <taxon>Bacteria</taxon>
        <taxon>Pseudomonadati</taxon>
        <taxon>Chlorobiota</taxon>
        <taxon>Chlorobiia</taxon>
        <taxon>Chlorobiales</taxon>
        <taxon>Chlorobiaceae</taxon>
        <taxon>Chlorobaculum</taxon>
    </lineage>
</organism>
<comment type="function">
    <text evidence="1">Catalyzes the oxidation of 3-carboxy-2-hydroxy-4-methylpentanoate (3-isopropylmalate) to 3-carboxy-4-methyl-2-oxopentanoate. The product decarboxylates to 4-methyl-2 oxopentanoate.</text>
</comment>
<comment type="catalytic activity">
    <reaction evidence="1">
        <text>(2R,3S)-3-isopropylmalate + NAD(+) = 4-methyl-2-oxopentanoate + CO2 + NADH</text>
        <dbReference type="Rhea" id="RHEA:32271"/>
        <dbReference type="ChEBI" id="CHEBI:16526"/>
        <dbReference type="ChEBI" id="CHEBI:17865"/>
        <dbReference type="ChEBI" id="CHEBI:35121"/>
        <dbReference type="ChEBI" id="CHEBI:57540"/>
        <dbReference type="ChEBI" id="CHEBI:57945"/>
        <dbReference type="EC" id="1.1.1.85"/>
    </reaction>
</comment>
<comment type="cofactor">
    <cofactor evidence="1">
        <name>Mg(2+)</name>
        <dbReference type="ChEBI" id="CHEBI:18420"/>
    </cofactor>
    <cofactor evidence="1">
        <name>Mn(2+)</name>
        <dbReference type="ChEBI" id="CHEBI:29035"/>
    </cofactor>
    <text evidence="1">Binds 1 Mg(2+) or Mn(2+) ion per subunit.</text>
</comment>
<comment type="pathway">
    <text evidence="1">Amino-acid biosynthesis; L-leucine biosynthesis; L-leucine from 3-methyl-2-oxobutanoate: step 3/4.</text>
</comment>
<comment type="subunit">
    <text evidence="1">Homodimer.</text>
</comment>
<comment type="subcellular location">
    <subcellularLocation>
        <location evidence="1">Cytoplasm</location>
    </subcellularLocation>
</comment>
<comment type="similarity">
    <text evidence="1">Belongs to the isocitrate and isopropylmalate dehydrogenases family. LeuB type 1 subfamily.</text>
</comment>
<accession>P59028</accession>
<gene>
    <name evidence="1" type="primary">leuB</name>
    <name type="ordered locus">CT0615</name>
</gene>
<protein>
    <recommendedName>
        <fullName evidence="1">3-isopropylmalate dehydrogenase</fullName>
        <ecNumber evidence="1">1.1.1.85</ecNumber>
    </recommendedName>
    <alternativeName>
        <fullName evidence="1">3-IPM-DH</fullName>
    </alternativeName>
    <alternativeName>
        <fullName evidence="1">Beta-IPM dehydrogenase</fullName>
        <shortName evidence="1">IMDH</shortName>
    </alternativeName>
</protein>